<name>IRAD_SALTY</name>
<dbReference type="EMBL" id="AE006468">
    <property type="protein sequence ID" value="AAL22004.1"/>
    <property type="molecule type" value="Genomic_DNA"/>
</dbReference>
<dbReference type="RefSeq" id="NP_462045.1">
    <property type="nucleotide sequence ID" value="NC_003197.2"/>
</dbReference>
<dbReference type="RefSeq" id="WP_000988938.1">
    <property type="nucleotide sequence ID" value="NC_003197.2"/>
</dbReference>
<dbReference type="SMR" id="Q8ZM27"/>
<dbReference type="STRING" id="99287.STM3130"/>
<dbReference type="PaxDb" id="99287-STM3130"/>
<dbReference type="GeneID" id="1254653"/>
<dbReference type="KEGG" id="stm:STM3130"/>
<dbReference type="PATRIC" id="fig|99287.12.peg.3317"/>
<dbReference type="HOGENOM" id="CLU_1977621_0_0_6"/>
<dbReference type="OMA" id="FKEAYCH"/>
<dbReference type="PhylomeDB" id="Q8ZM27"/>
<dbReference type="BioCyc" id="SENT99287:STM3130-MONOMER"/>
<dbReference type="Proteomes" id="UP000001014">
    <property type="component" value="Chromosome"/>
</dbReference>
<dbReference type="GO" id="GO:0005737">
    <property type="term" value="C:cytoplasm"/>
    <property type="evidence" value="ECO:0007669"/>
    <property type="project" value="UniProtKB-SubCell"/>
</dbReference>
<dbReference type="GO" id="GO:0043856">
    <property type="term" value="F:anti-sigma factor antagonist activity"/>
    <property type="evidence" value="ECO:0007669"/>
    <property type="project" value="InterPro"/>
</dbReference>
<dbReference type="GO" id="GO:0034599">
    <property type="term" value="P:cellular response to oxidative stress"/>
    <property type="evidence" value="ECO:0007669"/>
    <property type="project" value="UniProtKB-UniRule"/>
</dbReference>
<dbReference type="GO" id="GO:0006974">
    <property type="term" value="P:DNA damage response"/>
    <property type="evidence" value="ECO:0007669"/>
    <property type="project" value="InterPro"/>
</dbReference>
<dbReference type="HAMAP" id="MF_02010">
    <property type="entry name" value="IraD"/>
    <property type="match status" value="1"/>
</dbReference>
<dbReference type="InterPro" id="IPR023776">
    <property type="entry name" value="Anti-adapt_IraD"/>
</dbReference>
<dbReference type="InterPro" id="IPR007048">
    <property type="entry name" value="IraD/Gp25-like"/>
</dbReference>
<dbReference type="NCBIfam" id="NF010727">
    <property type="entry name" value="PRK14128.1-2"/>
    <property type="match status" value="1"/>
</dbReference>
<dbReference type="Pfam" id="PF04965">
    <property type="entry name" value="GPW_gp25"/>
    <property type="match status" value="1"/>
</dbReference>
<proteinExistence type="inferred from homology"/>
<evidence type="ECO:0000255" key="1">
    <source>
        <dbReference type="HAMAP-Rule" id="MF_02010"/>
    </source>
</evidence>
<feature type="chain" id="PRO_0000337901" description="Anti-adapter protein IraD">
    <location>
        <begin position="1"/>
        <end position="126"/>
    </location>
</feature>
<accession>Q8ZM27</accession>
<sequence length="126" mass="14436">MMTPTIPVALFDRLLVEGISPHELVRRKLMCLFNSCAVPGGETLPPLLTRGMPEWHEVNVGDKRVLNWFCRELRAAILRYEPSINMLKVSVKDAHHQTLALSLEAMLQDESEPLRLEIAYSNGRWR</sequence>
<comment type="function">
    <text evidence="1">Inhibits RpoS proteolysis by regulating RssB activity, thereby increasing the stability of the sigma stress factor RpoS during oxidative stress. Its effect on RpoS stability is due to its interaction with RssB, which probably blocks the interaction of RssB with RpoS, and the consequent delivery of the RssB-RpoS complex to the ClpXP protein degradation pathway.</text>
</comment>
<comment type="subunit">
    <text evidence="1">Interacts with RssB.</text>
</comment>
<comment type="subcellular location">
    <subcellularLocation>
        <location evidence="1">Cytoplasm</location>
    </subcellularLocation>
</comment>
<comment type="similarity">
    <text evidence="1">Belongs to the GpW/Gp25 family. IraD subfamily.</text>
</comment>
<keyword id="KW-0963">Cytoplasm</keyword>
<keyword id="KW-1185">Reference proteome</keyword>
<keyword id="KW-0346">Stress response</keyword>
<protein>
    <recommendedName>
        <fullName evidence="1">Anti-adapter protein IraD</fullName>
    </recommendedName>
</protein>
<gene>
    <name evidence="1" type="primary">iraD</name>
    <name type="ordered locus">STM3130</name>
</gene>
<organism>
    <name type="scientific">Salmonella typhimurium (strain LT2 / SGSC1412 / ATCC 700720)</name>
    <dbReference type="NCBI Taxonomy" id="99287"/>
    <lineage>
        <taxon>Bacteria</taxon>
        <taxon>Pseudomonadati</taxon>
        <taxon>Pseudomonadota</taxon>
        <taxon>Gammaproteobacteria</taxon>
        <taxon>Enterobacterales</taxon>
        <taxon>Enterobacteriaceae</taxon>
        <taxon>Salmonella</taxon>
    </lineage>
</organism>
<reference key="1">
    <citation type="journal article" date="2001" name="Nature">
        <title>Complete genome sequence of Salmonella enterica serovar Typhimurium LT2.</title>
        <authorList>
            <person name="McClelland M."/>
            <person name="Sanderson K.E."/>
            <person name="Spieth J."/>
            <person name="Clifton S.W."/>
            <person name="Latreille P."/>
            <person name="Courtney L."/>
            <person name="Porwollik S."/>
            <person name="Ali J."/>
            <person name="Dante M."/>
            <person name="Du F."/>
            <person name="Hou S."/>
            <person name="Layman D."/>
            <person name="Leonard S."/>
            <person name="Nguyen C."/>
            <person name="Scott K."/>
            <person name="Holmes A."/>
            <person name="Grewal N."/>
            <person name="Mulvaney E."/>
            <person name="Ryan E."/>
            <person name="Sun H."/>
            <person name="Florea L."/>
            <person name="Miller W."/>
            <person name="Stoneking T."/>
            <person name="Nhan M."/>
            <person name="Waterston R."/>
            <person name="Wilson R.K."/>
        </authorList>
    </citation>
    <scope>NUCLEOTIDE SEQUENCE [LARGE SCALE GENOMIC DNA]</scope>
    <source>
        <strain>LT2 / SGSC1412 / ATCC 700720</strain>
    </source>
</reference>